<evidence type="ECO:0000250" key="1"/>
<evidence type="ECO:0000255" key="2"/>
<evidence type="ECO:0000256" key="3">
    <source>
        <dbReference type="SAM" id="MobiDB-lite"/>
    </source>
</evidence>
<evidence type="ECO:0000269" key="4">
    <source>
    </source>
</evidence>
<evidence type="ECO:0000269" key="5">
    <source>
    </source>
</evidence>
<evidence type="ECO:0000269" key="6">
    <source>
    </source>
</evidence>
<evidence type="ECO:0000269" key="7">
    <source>
    </source>
</evidence>
<evidence type="ECO:0000269" key="8">
    <source>
    </source>
</evidence>
<evidence type="ECO:0000269" key="9">
    <source>
    </source>
</evidence>
<evidence type="ECO:0000305" key="10"/>
<protein>
    <recommendedName>
        <fullName>Aquaporin-1</fullName>
    </recommendedName>
</protein>
<dbReference type="EMBL" id="AF053981">
    <property type="protein sequence ID" value="AAC69713.1"/>
    <property type="molecule type" value="Genomic_DNA"/>
</dbReference>
<dbReference type="SMR" id="P0CD92"/>
<dbReference type="IntAct" id="P0CD92">
    <property type="interactions" value="3"/>
</dbReference>
<dbReference type="MINT" id="P0CD92"/>
<dbReference type="VEuPathDB" id="FungiDB:YPR192W"/>
<dbReference type="PhylomeDB" id="P0CD92"/>
<dbReference type="GO" id="GO:0005789">
    <property type="term" value="C:endoplasmic reticulum membrane"/>
    <property type="evidence" value="ECO:0007669"/>
    <property type="project" value="UniProtKB-SubCell"/>
</dbReference>
<dbReference type="GO" id="GO:0005886">
    <property type="term" value="C:plasma membrane"/>
    <property type="evidence" value="ECO:0007669"/>
    <property type="project" value="UniProtKB-SubCell"/>
</dbReference>
<dbReference type="GO" id="GO:0015250">
    <property type="term" value="F:water channel activity"/>
    <property type="evidence" value="ECO:0007669"/>
    <property type="project" value="TreeGrafter"/>
</dbReference>
<dbReference type="FunFam" id="1.20.1080.10:FF:000014">
    <property type="entry name" value="Aquaporin 1"/>
    <property type="match status" value="1"/>
</dbReference>
<dbReference type="Gene3D" id="1.20.1080.10">
    <property type="entry name" value="Glycerol uptake facilitator protein"/>
    <property type="match status" value="1"/>
</dbReference>
<dbReference type="InterPro" id="IPR023271">
    <property type="entry name" value="Aquaporin-like"/>
</dbReference>
<dbReference type="InterPro" id="IPR034294">
    <property type="entry name" value="Aquaporin_transptr"/>
</dbReference>
<dbReference type="InterPro" id="IPR000425">
    <property type="entry name" value="MIP"/>
</dbReference>
<dbReference type="InterPro" id="IPR022357">
    <property type="entry name" value="MIP_CS"/>
</dbReference>
<dbReference type="NCBIfam" id="TIGR00861">
    <property type="entry name" value="MIP"/>
    <property type="match status" value="1"/>
</dbReference>
<dbReference type="PANTHER" id="PTHR19139">
    <property type="entry name" value="AQUAPORIN TRANSPORTER"/>
    <property type="match status" value="1"/>
</dbReference>
<dbReference type="PANTHER" id="PTHR19139:SF199">
    <property type="entry name" value="MIP17260P"/>
    <property type="match status" value="1"/>
</dbReference>
<dbReference type="Pfam" id="PF00230">
    <property type="entry name" value="MIP"/>
    <property type="match status" value="1"/>
</dbReference>
<dbReference type="PRINTS" id="PR00783">
    <property type="entry name" value="MINTRINSICP"/>
</dbReference>
<dbReference type="SUPFAM" id="SSF81338">
    <property type="entry name" value="Aquaporin-like"/>
    <property type="match status" value="1"/>
</dbReference>
<dbReference type="PROSITE" id="PS00221">
    <property type="entry name" value="MIP"/>
    <property type="match status" value="1"/>
</dbReference>
<feature type="chain" id="PRO_0000391661" description="Aquaporin-1">
    <location>
        <begin position="1"/>
        <end position="327"/>
    </location>
</feature>
<feature type="topological domain" description="Cytoplasmic" evidence="1">
    <location>
        <begin position="1"/>
        <end position="48"/>
    </location>
</feature>
<feature type="transmembrane region" description="Helical; Name=1" evidence="2">
    <location>
        <begin position="49"/>
        <end position="69"/>
    </location>
</feature>
<feature type="topological domain" description="Extracellular" evidence="1">
    <location>
        <begin position="70"/>
        <end position="91"/>
    </location>
</feature>
<feature type="transmembrane region" description="Helical; Name=2" evidence="2">
    <location>
        <begin position="92"/>
        <end position="112"/>
    </location>
</feature>
<feature type="topological domain" description="Cytoplasmic" evidence="1">
    <location>
        <begin position="113"/>
        <end position="136"/>
    </location>
</feature>
<feature type="transmembrane region" description="Helical; Name=3" evidence="2">
    <location>
        <begin position="137"/>
        <end position="157"/>
    </location>
</feature>
<feature type="topological domain" description="Extracellular" evidence="1">
    <location>
        <begin position="158"/>
        <end position="176"/>
    </location>
</feature>
<feature type="transmembrane region" description="Helical; Name=4" evidence="2">
    <location>
        <begin position="177"/>
        <end position="197"/>
    </location>
</feature>
<feature type="topological domain" description="Cytoplasmic" evidence="1">
    <location>
        <begin position="198"/>
        <end position="203"/>
    </location>
</feature>
<feature type="transmembrane region" description="Helical; Name=5" evidence="2">
    <location>
        <begin position="204"/>
        <end position="224"/>
    </location>
</feature>
<feature type="topological domain" description="Extracellular" evidence="1">
    <location>
        <begin position="225"/>
        <end position="248"/>
    </location>
</feature>
<feature type="transmembrane region" description="Helical; Name=6" evidence="2">
    <location>
        <begin position="249"/>
        <end position="269"/>
    </location>
</feature>
<feature type="topological domain" description="Cytoplasmic" evidence="1">
    <location>
        <begin position="270"/>
        <end position="327"/>
    </location>
</feature>
<feature type="region of interest" description="Disordered" evidence="3">
    <location>
        <begin position="1"/>
        <end position="34"/>
    </location>
</feature>
<feature type="short sequence motif" description="NPA 1">
    <location>
        <begin position="118"/>
        <end position="120"/>
    </location>
</feature>
<feature type="short sequence motif" description="NPA 2">
    <location>
        <begin position="230"/>
        <end position="232"/>
    </location>
</feature>
<sequence>MSSNDSNDTDKQHTRLDPTGVDDAYIPPEQPETKHHRFKISRDTLRNHFIAAVGEFCGTFMFLWCAYVICNVANHDVALVAAPDGSHPGQLIMIAIGFGFSVMFSIWCFAGVSGGALNPAVSLSLCLARAVSPTRCVVMWVSQIVAGMAAGGAASAMTPGEVLFANSLGLGCSRTRGLFLEMFGTAILCLTVLMTAVEKRETNFMAALPIGISLFIAHVALTAYTGTGVNPARSLGAAVAARYFPHYHWIYWIGPLLGSILAWSVWQLLQILDYTTYVTAEKAASTKEKAQKKVKPAVPLLWLKSNFPLLFFISRSLALNVIIFGKN</sequence>
<name>AQY1_YEASX</name>
<proteinExistence type="evidence at transcript level"/>
<comment type="function">
    <text evidence="4 5 6 7 8 9">Water channel required to facilitate the transport of water across membranes. Involved in sporulation, freeze tolerance and osmotolerance. Is non-functional in most laboratory strains.</text>
</comment>
<comment type="subcellular location">
    <subcellularLocation>
        <location evidence="8">Endoplasmic reticulum membrane</location>
        <topology evidence="8">Multi-pass membrane protein</topology>
    </subcellularLocation>
    <subcellularLocation>
        <location evidence="8">Cell membrane</location>
        <topology evidence="8">Multi-pass membrane protein</topology>
    </subcellularLocation>
</comment>
<comment type="developmental stage">
    <text evidence="8">Expressed in spores.</text>
</comment>
<comment type="domain">
    <text>Aquaporins contain two tandem repeats each containing three membrane-spanning domains and a pore-forming loop with the signature motif Asn-Pro-Ala (NPA).</text>
</comment>
<comment type="similarity">
    <text evidence="10">Belongs to the MIP/aquaporin (TC 1.A.8) family.</text>
</comment>
<keyword id="KW-1003">Cell membrane</keyword>
<keyword id="KW-0256">Endoplasmic reticulum</keyword>
<keyword id="KW-0472">Membrane</keyword>
<keyword id="KW-0677">Repeat</keyword>
<keyword id="KW-0812">Transmembrane</keyword>
<keyword id="KW-1133">Transmembrane helix</keyword>
<keyword id="KW-0813">Transport</keyword>
<reference key="1">
    <citation type="journal article" date="1998" name="J. Biol. Chem.">
        <title>Aquaporins in Saccharomyces. Genetic and functional distinctions between laboratory and wild-type strains.</title>
        <authorList>
            <person name="Bonhivers M."/>
            <person name="Carbrey J.M."/>
            <person name="Gould S.J."/>
            <person name="Agre P."/>
        </authorList>
    </citation>
    <scope>NUCLEOTIDE SEQUENCE [GENOMIC DNA]</scope>
    <scope>FUNCTION</scope>
    <source>
        <strain>Sigma 1278B</strain>
    </source>
</reference>
<reference key="2">
    <citation type="journal article" date="1999" name="Biochem. Biophys. Res. Commun.">
        <title>Molecular and functional study of AQY1 from Saccharomyces cerevisiae: role of the C-terminal domain.</title>
        <authorList>
            <person name="Laize V."/>
            <person name="Gobin R."/>
            <person name="Rousselet G."/>
            <person name="Badier C."/>
            <person name="Hohmann S."/>
            <person name="Ripoche P."/>
            <person name="Tacnet F."/>
        </authorList>
    </citation>
    <scope>FUNCTION</scope>
    <source>
        <strain>Sigma 1278B</strain>
    </source>
</reference>
<reference key="3">
    <citation type="journal article" date="2000" name="Yeast">
        <title>Polymorphism of Saccharomyces cerevisiae aquaporins.</title>
        <authorList>
            <person name="Laize V."/>
            <person name="Tacnet F."/>
            <person name="Ripoche P."/>
            <person name="Hohmann S."/>
        </authorList>
    </citation>
    <scope>FUNCTION</scope>
    <source>
        <strain>Sigma 1278B</strain>
    </source>
</reference>
<reference key="4">
    <citation type="journal article" date="2002" name="Appl. Environ. Microbiol.">
        <title>Aquaporin expression correlates with freeze tolerance in baker's yeast, and overexpression improves freeze tolerance in industrial strains.</title>
        <authorList>
            <person name="Tanghe A."/>
            <person name="Van Dijck P."/>
            <person name="Dumortier F."/>
            <person name="Teunissen A."/>
            <person name="Hohmann S."/>
            <person name="Thevelein J.M."/>
        </authorList>
    </citation>
    <scope>FUNCTION</scope>
</reference>
<reference key="5">
    <citation type="journal article" date="2004" name="Appl. Environ. Microbiol.">
        <title>Aquaporin-mediated improvement of freeze tolerance of Saccharomyces cerevisiae is restricted to rapid freezing conditions.</title>
        <authorList>
            <person name="Tanghe A."/>
            <person name="Van Dijck P."/>
            <person name="Colavizza D."/>
            <person name="Thevelein J.M."/>
        </authorList>
    </citation>
    <scope>FUNCTION</scope>
</reference>
<reference key="6">
    <citation type="journal article" date="2004" name="Proc. Natl. Acad. Sci. U.S.A.">
        <title>The Saccharomyces cerevisiae aquaporin Aqy1 is involved in sporulation.</title>
        <authorList>
            <person name="Sidoux-Walter F."/>
            <person name="Pettersson N."/>
            <person name="Hohmann S."/>
        </authorList>
    </citation>
    <scope>FUNCTION</scope>
    <scope>SUBCELLULAR LOCATION</scope>
    <scope>DEVELOPMENTAL STAGE</scope>
    <source>
        <strain>SK1</strain>
    </source>
</reference>
<accession>P0CD92</accession>
<accession>O74680</accession>
<accession>P53386</accession>
<gene>
    <name type="primary">AQY1</name>
    <name type="synonym">AQY1-1</name>
</gene>
<organism>
    <name type="scientific">Saccharomyces cerevisiae</name>
    <name type="common">Baker's yeast</name>
    <dbReference type="NCBI Taxonomy" id="4932"/>
    <lineage>
        <taxon>Eukaryota</taxon>
        <taxon>Fungi</taxon>
        <taxon>Dikarya</taxon>
        <taxon>Ascomycota</taxon>
        <taxon>Saccharomycotina</taxon>
        <taxon>Saccharomycetes</taxon>
        <taxon>Saccharomycetales</taxon>
        <taxon>Saccharomycetaceae</taxon>
        <taxon>Saccharomyces</taxon>
    </lineage>
</organism>